<proteinExistence type="inferred from homology"/>
<name>Y734_NITMU</name>
<comment type="similarity">
    <text evidence="1">Belongs to the UPF0145 family.</text>
</comment>
<organism>
    <name type="scientific">Nitrosospira multiformis (strain ATCC 25196 / NCIMB 11849 / C 71)</name>
    <dbReference type="NCBI Taxonomy" id="323848"/>
    <lineage>
        <taxon>Bacteria</taxon>
        <taxon>Pseudomonadati</taxon>
        <taxon>Pseudomonadota</taxon>
        <taxon>Betaproteobacteria</taxon>
        <taxon>Nitrosomonadales</taxon>
        <taxon>Nitrosomonadaceae</taxon>
        <taxon>Nitrosospira</taxon>
    </lineage>
</organism>
<feature type="chain" id="PRO_1000013017" description="UPF0145 protein Nmul_A0734">
    <location>
        <begin position="1"/>
        <end position="106"/>
    </location>
</feature>
<evidence type="ECO:0000255" key="1">
    <source>
        <dbReference type="HAMAP-Rule" id="MF_00338"/>
    </source>
</evidence>
<dbReference type="EMBL" id="CP000103">
    <property type="protein sequence ID" value="ABB74041.1"/>
    <property type="molecule type" value="Genomic_DNA"/>
</dbReference>
<dbReference type="RefSeq" id="WP_011380091.1">
    <property type="nucleotide sequence ID" value="NC_007614.1"/>
</dbReference>
<dbReference type="SMR" id="Q2YB30"/>
<dbReference type="STRING" id="323848.Nmul_A0734"/>
<dbReference type="KEGG" id="nmu:Nmul_A0734"/>
<dbReference type="eggNOG" id="COG0393">
    <property type="taxonomic scope" value="Bacteria"/>
</dbReference>
<dbReference type="HOGENOM" id="CLU_117144_3_2_4"/>
<dbReference type="OrthoDB" id="9796448at2"/>
<dbReference type="Proteomes" id="UP000002718">
    <property type="component" value="Chromosome"/>
</dbReference>
<dbReference type="Gene3D" id="3.30.110.70">
    <property type="entry name" value="Hypothetical protein apc22750. Chain B"/>
    <property type="match status" value="1"/>
</dbReference>
<dbReference type="HAMAP" id="MF_00338">
    <property type="entry name" value="UPF0145"/>
    <property type="match status" value="1"/>
</dbReference>
<dbReference type="InterPro" id="IPR035439">
    <property type="entry name" value="UPF0145_dom_sf"/>
</dbReference>
<dbReference type="InterPro" id="IPR002765">
    <property type="entry name" value="UPF0145_YbjQ-like"/>
</dbReference>
<dbReference type="NCBIfam" id="NF002776">
    <property type="entry name" value="PRK02877.1"/>
    <property type="match status" value="1"/>
</dbReference>
<dbReference type="PANTHER" id="PTHR34068">
    <property type="entry name" value="UPF0145 PROTEIN YBJQ"/>
    <property type="match status" value="1"/>
</dbReference>
<dbReference type="PANTHER" id="PTHR34068:SF1">
    <property type="entry name" value="UPF0145 PROTEIN YBJQ"/>
    <property type="match status" value="1"/>
</dbReference>
<dbReference type="Pfam" id="PF01906">
    <property type="entry name" value="YbjQ_1"/>
    <property type="match status" value="1"/>
</dbReference>
<dbReference type="SUPFAM" id="SSF117782">
    <property type="entry name" value="YbjQ-like"/>
    <property type="match status" value="1"/>
</dbReference>
<sequence length="106" mass="11309">MQLTTTPGIDGKRITRYCGVVAGEAVLGANIFKDLFAGIRDLVGGRSGTYEKELQRARDIALEELQQRAHDLGANAVVGIDIDYEVLGKENGMLMVSASGTAVIVE</sequence>
<keyword id="KW-1185">Reference proteome</keyword>
<reference key="1">
    <citation type="submission" date="2005-08" db="EMBL/GenBank/DDBJ databases">
        <title>Complete sequence of chromosome 1 of Nitrosospira multiformis ATCC 25196.</title>
        <authorList>
            <person name="Copeland A."/>
            <person name="Lucas S."/>
            <person name="Lapidus A."/>
            <person name="Barry K."/>
            <person name="Detter J.C."/>
            <person name="Glavina T."/>
            <person name="Hammon N."/>
            <person name="Israni S."/>
            <person name="Pitluck S."/>
            <person name="Chain P."/>
            <person name="Malfatti S."/>
            <person name="Shin M."/>
            <person name="Vergez L."/>
            <person name="Schmutz J."/>
            <person name="Larimer F."/>
            <person name="Land M."/>
            <person name="Hauser L."/>
            <person name="Kyrpides N."/>
            <person name="Lykidis A."/>
            <person name="Richardson P."/>
        </authorList>
    </citation>
    <scope>NUCLEOTIDE SEQUENCE [LARGE SCALE GENOMIC DNA]</scope>
    <source>
        <strain>ATCC 25196 / NCIMB 11849 / C 71</strain>
    </source>
</reference>
<accession>Q2YB30</accession>
<gene>
    <name type="ordered locus">Nmul_A0734</name>
</gene>
<protein>
    <recommendedName>
        <fullName evidence="1">UPF0145 protein Nmul_A0734</fullName>
    </recommendedName>
</protein>